<dbReference type="EMBL" id="AC097065">
    <property type="status" value="NOT_ANNOTATED_CDS"/>
    <property type="molecule type" value="Genomic_DNA"/>
</dbReference>
<dbReference type="EMBL" id="BC040731">
    <property type="status" value="NOT_ANNOTATED_CDS"/>
    <property type="molecule type" value="mRNA"/>
</dbReference>
<dbReference type="BioMuta" id="HGNC:21901"/>
<dbReference type="jPOST" id="A6NCI5"/>
<dbReference type="AGR" id="HGNC:21901"/>
<dbReference type="GeneCards" id="LINC00862"/>
<dbReference type="HGNC" id="HGNC:21901">
    <property type="gene designation" value="LINC00862"/>
</dbReference>
<dbReference type="neXtProt" id="NX_A6NCI5"/>
<dbReference type="InParanoid" id="A6NCI5"/>
<dbReference type="PAN-GO" id="A6NCI5">
    <property type="GO annotations" value="0 GO annotations based on evolutionary models"/>
</dbReference>
<dbReference type="PhylomeDB" id="A6NCI5"/>
<dbReference type="PathwayCommons" id="A6NCI5"/>
<dbReference type="ChiTaRS" id="LINC00862">
    <property type="organism name" value="human"/>
</dbReference>
<dbReference type="Pharos" id="A6NCI5">
    <property type="development level" value="Tdark"/>
</dbReference>
<dbReference type="Proteomes" id="UP000005640">
    <property type="component" value="Unplaced"/>
</dbReference>
<dbReference type="RNAct" id="A6NCI5">
    <property type="molecule type" value="protein"/>
</dbReference>
<dbReference type="GO" id="GO:0016020">
    <property type="term" value="C:membrane"/>
    <property type="evidence" value="ECO:0007669"/>
    <property type="project" value="UniProtKB-SubCell"/>
</dbReference>
<sequence length="91" mass="10419">MVCYLYWETFPSISHLLKITLSARDCHVCGLNLFIFMDPVENQALHPVIMALILMPSLHCFGNILILLFLKSPAQLFCRMSVDLALLFPHK</sequence>
<gene>
    <name type="primary">LINC00862</name>
    <name type="synonym">C1orf98</name>
    <name type="synonym">SMIM16</name>
</gene>
<proteinExistence type="uncertain"/>
<accession>A6NCI5</accession>
<organism>
    <name type="scientific">Homo sapiens</name>
    <name type="common">Human</name>
    <dbReference type="NCBI Taxonomy" id="9606"/>
    <lineage>
        <taxon>Eukaryota</taxon>
        <taxon>Metazoa</taxon>
        <taxon>Chordata</taxon>
        <taxon>Craniata</taxon>
        <taxon>Vertebrata</taxon>
        <taxon>Euteleostomi</taxon>
        <taxon>Mammalia</taxon>
        <taxon>Eutheria</taxon>
        <taxon>Euarchontoglires</taxon>
        <taxon>Primates</taxon>
        <taxon>Haplorrhini</taxon>
        <taxon>Catarrhini</taxon>
        <taxon>Hominidae</taxon>
        <taxon>Homo</taxon>
    </lineage>
</organism>
<comment type="subcellular location">
    <subcellularLocation>
        <location evidence="2">Membrane</location>
        <topology evidence="2">Single-pass membrane protein</topology>
    </subcellularLocation>
</comment>
<comment type="caution">
    <text evidence="2">Product of a dubious CDS prediction.</text>
</comment>
<keyword id="KW-0472">Membrane</keyword>
<keyword id="KW-1185">Reference proteome</keyword>
<keyword id="KW-0812">Transmembrane</keyword>
<keyword id="KW-1133">Transmembrane helix</keyword>
<name>SIM16_HUMAN</name>
<evidence type="ECO:0000255" key="1"/>
<evidence type="ECO:0000305" key="2"/>
<feature type="chain" id="PRO_0000314187" description="Putative transmembrane protein encoded by LINC00862">
    <location>
        <begin position="1"/>
        <end position="91"/>
    </location>
</feature>
<feature type="transmembrane region" description="Helical" evidence="1">
    <location>
        <begin position="49"/>
        <end position="69"/>
    </location>
</feature>
<protein>
    <recommendedName>
        <fullName>Putative transmembrane protein encoded by LINC00862</fullName>
    </recommendedName>
    <alternativeName>
        <fullName>Small integral membrane protein 16</fullName>
    </alternativeName>
</protein>
<reference key="1">
    <citation type="journal article" date="2006" name="Nature">
        <title>The DNA sequence and biological annotation of human chromosome 1.</title>
        <authorList>
            <person name="Gregory S.G."/>
            <person name="Barlow K.F."/>
            <person name="McLay K.E."/>
            <person name="Kaul R."/>
            <person name="Swarbreck D."/>
            <person name="Dunham A."/>
            <person name="Scott C.E."/>
            <person name="Howe K.L."/>
            <person name="Woodfine K."/>
            <person name="Spencer C.C.A."/>
            <person name="Jones M.C."/>
            <person name="Gillson C."/>
            <person name="Searle S."/>
            <person name="Zhou Y."/>
            <person name="Kokocinski F."/>
            <person name="McDonald L."/>
            <person name="Evans R."/>
            <person name="Phillips K."/>
            <person name="Atkinson A."/>
            <person name="Cooper R."/>
            <person name="Jones C."/>
            <person name="Hall R.E."/>
            <person name="Andrews T.D."/>
            <person name="Lloyd C."/>
            <person name="Ainscough R."/>
            <person name="Almeida J.P."/>
            <person name="Ambrose K.D."/>
            <person name="Anderson F."/>
            <person name="Andrew R.W."/>
            <person name="Ashwell R.I.S."/>
            <person name="Aubin K."/>
            <person name="Babbage A.K."/>
            <person name="Bagguley C.L."/>
            <person name="Bailey J."/>
            <person name="Beasley H."/>
            <person name="Bethel G."/>
            <person name="Bird C.P."/>
            <person name="Bray-Allen S."/>
            <person name="Brown J.Y."/>
            <person name="Brown A.J."/>
            <person name="Buckley D."/>
            <person name="Burton J."/>
            <person name="Bye J."/>
            <person name="Carder C."/>
            <person name="Chapman J.C."/>
            <person name="Clark S.Y."/>
            <person name="Clarke G."/>
            <person name="Clee C."/>
            <person name="Cobley V."/>
            <person name="Collier R.E."/>
            <person name="Corby N."/>
            <person name="Coville G.J."/>
            <person name="Davies J."/>
            <person name="Deadman R."/>
            <person name="Dunn M."/>
            <person name="Earthrowl M."/>
            <person name="Ellington A.G."/>
            <person name="Errington H."/>
            <person name="Frankish A."/>
            <person name="Frankland J."/>
            <person name="French L."/>
            <person name="Garner P."/>
            <person name="Garnett J."/>
            <person name="Gay L."/>
            <person name="Ghori M.R.J."/>
            <person name="Gibson R."/>
            <person name="Gilby L.M."/>
            <person name="Gillett W."/>
            <person name="Glithero R.J."/>
            <person name="Grafham D.V."/>
            <person name="Griffiths C."/>
            <person name="Griffiths-Jones S."/>
            <person name="Grocock R."/>
            <person name="Hammond S."/>
            <person name="Harrison E.S.I."/>
            <person name="Hart E."/>
            <person name="Haugen E."/>
            <person name="Heath P.D."/>
            <person name="Holmes S."/>
            <person name="Holt K."/>
            <person name="Howden P.J."/>
            <person name="Hunt A.R."/>
            <person name="Hunt S.E."/>
            <person name="Hunter G."/>
            <person name="Isherwood J."/>
            <person name="James R."/>
            <person name="Johnson C."/>
            <person name="Johnson D."/>
            <person name="Joy A."/>
            <person name="Kay M."/>
            <person name="Kershaw J.K."/>
            <person name="Kibukawa M."/>
            <person name="Kimberley A.M."/>
            <person name="King A."/>
            <person name="Knights A.J."/>
            <person name="Lad H."/>
            <person name="Laird G."/>
            <person name="Lawlor S."/>
            <person name="Leongamornlert D.A."/>
            <person name="Lloyd D.M."/>
            <person name="Loveland J."/>
            <person name="Lovell J."/>
            <person name="Lush M.J."/>
            <person name="Lyne R."/>
            <person name="Martin S."/>
            <person name="Mashreghi-Mohammadi M."/>
            <person name="Matthews L."/>
            <person name="Matthews N.S.W."/>
            <person name="McLaren S."/>
            <person name="Milne S."/>
            <person name="Mistry S."/>
            <person name="Moore M.J.F."/>
            <person name="Nickerson T."/>
            <person name="O'Dell C.N."/>
            <person name="Oliver K."/>
            <person name="Palmeiri A."/>
            <person name="Palmer S.A."/>
            <person name="Parker A."/>
            <person name="Patel D."/>
            <person name="Pearce A.V."/>
            <person name="Peck A.I."/>
            <person name="Pelan S."/>
            <person name="Phelps K."/>
            <person name="Phillimore B.J."/>
            <person name="Plumb R."/>
            <person name="Rajan J."/>
            <person name="Raymond C."/>
            <person name="Rouse G."/>
            <person name="Saenphimmachak C."/>
            <person name="Sehra H.K."/>
            <person name="Sheridan E."/>
            <person name="Shownkeen R."/>
            <person name="Sims S."/>
            <person name="Skuce C.D."/>
            <person name="Smith M."/>
            <person name="Steward C."/>
            <person name="Subramanian S."/>
            <person name="Sycamore N."/>
            <person name="Tracey A."/>
            <person name="Tromans A."/>
            <person name="Van Helmond Z."/>
            <person name="Wall M."/>
            <person name="Wallis J.M."/>
            <person name="White S."/>
            <person name="Whitehead S.L."/>
            <person name="Wilkinson J.E."/>
            <person name="Willey D.L."/>
            <person name="Williams H."/>
            <person name="Wilming L."/>
            <person name="Wray P.W."/>
            <person name="Wu Z."/>
            <person name="Coulson A."/>
            <person name="Vaudin M."/>
            <person name="Sulston J.E."/>
            <person name="Durbin R.M."/>
            <person name="Hubbard T."/>
            <person name="Wooster R."/>
            <person name="Dunham I."/>
            <person name="Carter N.P."/>
            <person name="McVean G."/>
            <person name="Ross M.T."/>
            <person name="Harrow J."/>
            <person name="Olson M.V."/>
            <person name="Beck S."/>
            <person name="Rogers J."/>
            <person name="Bentley D.R."/>
        </authorList>
    </citation>
    <scope>NUCLEOTIDE SEQUENCE [LARGE SCALE GENOMIC DNA]</scope>
</reference>
<reference key="2">
    <citation type="journal article" date="2004" name="Genome Res.">
        <title>The status, quality, and expansion of the NIH full-length cDNA project: the Mammalian Gene Collection (MGC).</title>
        <authorList>
            <consortium name="The MGC Project Team"/>
        </authorList>
    </citation>
    <scope>NUCLEOTIDE SEQUENCE [LARGE SCALE MRNA]</scope>
    <source>
        <tissue>Brain</tissue>
    </source>
</reference>